<gene>
    <name type="primary">ECR1</name>
    <name type="ordered locus">At5g19180</name>
    <name type="ORF">T24G5_80</name>
</gene>
<proteinExistence type="evidence at protein level"/>
<organism>
    <name type="scientific">Arabidopsis thaliana</name>
    <name type="common">Mouse-ear cress</name>
    <dbReference type="NCBI Taxonomy" id="3702"/>
    <lineage>
        <taxon>Eukaryota</taxon>
        <taxon>Viridiplantae</taxon>
        <taxon>Streptophyta</taxon>
        <taxon>Embryophyta</taxon>
        <taxon>Tracheophyta</taxon>
        <taxon>Spermatophyta</taxon>
        <taxon>Magnoliopsida</taxon>
        <taxon>eudicotyledons</taxon>
        <taxon>Gunneridae</taxon>
        <taxon>Pentapetalae</taxon>
        <taxon>rosids</taxon>
        <taxon>malvids</taxon>
        <taxon>Brassicales</taxon>
        <taxon>Brassicaceae</taxon>
        <taxon>Camelineae</taxon>
        <taxon>Arabidopsis</taxon>
    </lineage>
</organism>
<sequence>MADLDVPPQVPQSKTRDLDKLLLRHGNLVDPGFVPGPGLRDDIRDYVRILVIGAGGLGCELLKDLALSGFRNLEVIDMDRIEVTNLNRQFLFRIEDVGKPKAEVAAKRVMERVSGVEIVPHFSRIEDKEIEFYNDFNIIALGLDSIEARKYINGVACGFLEYNEDDTPKRETIKPMVDGGTEGFKGHARVILPGVTPCFECTIYLFPPQVKFPLCTLAETPRNAAHCIEYAHLIQWETVHRGKTFDPDEPEHMKWVYDEAIRRAELFGIPGVTYSLTQGVVKNIIPAIASTNAIISAACALETLKIVSACSKTLVNYLTYNGGEGLYTEVTKFERDTECLVCGPGILIELDTSVTLSKFIEMLEDHPKLLLSKASVKQGENTLYMQAPPVLEEFHRPKLSKPLYDLMGRVQKDTIHVFGQRALKNNEKESCTTKVRVVFKGADGVADMDTAIGA</sequence>
<protein>
    <recommendedName>
        <fullName>NEDD8-activating enzyme E1 catalytic subunit</fullName>
        <ecNumber>6.2.1.64</ecNumber>
    </recommendedName>
    <alternativeName>
        <fullName>RUB-activating enzyme</fullName>
    </alternativeName>
    <alternativeName>
        <fullName>Ubiquitin-activating enzyme E1-like protein</fullName>
    </alternativeName>
</protein>
<name>UBA3_ARATH</name>
<accession>O65041</accession>
<accession>Q0WWG4</accession>
<accession>Q94A29</accession>
<comment type="function">
    <text evidence="1 2 4">Catalytic subunit of the dimeric ECR1-AXR1 E1 enzyme. E1 activates NEDD8/RUB1 by first adenylating its C-terminal glycine residue with ATP, thereafter linking this residue to the side chain of the catalytic cysteine, yielding a NEDD8-ECR1 thioester and free AMP. E1 finally transfers NEDD8 to the catalytic cysteine of RCE1 (By similarity).</text>
</comment>
<comment type="catalytic activity">
    <reaction>
        <text>ATP + [NEDD8 protein] + [E1 NEDD8-activating enzyme]-L-cysteine = AMP + diphosphate + [E1 NEDD8-activating enzyme]-S-[NEDD8 protein]-yl-L-cysteine.</text>
        <dbReference type="EC" id="6.2.1.64"/>
    </reaction>
</comment>
<comment type="pathway">
    <text>Protein modification; protein neddylation.</text>
</comment>
<comment type="subunit">
    <text evidence="4">Heterodimer of UBA3/ECR1 and AXR1. Interacts with NEDD8 and RCE1.</text>
</comment>
<comment type="subcellular location">
    <subcellularLocation>
        <location evidence="5">Nucleus</location>
    </subcellularLocation>
</comment>
<comment type="tissue specificity">
    <text evidence="3">Expressed in shoot, root and floral meristems, in vascular tissues of cotyledons and mature leaves, and in the stele of the root.</text>
</comment>
<comment type="developmental stage">
    <text evidence="3">Expressed during ovules and embryo development.</text>
</comment>
<comment type="induction">
    <text>No accumulation in response to auxin treatment.</text>
</comment>
<comment type="miscellaneous">
    <text>The formation of the adenylate intermediate is possible in absence of AXR1 and without the participation of Cys-215.</text>
</comment>
<comment type="similarity">
    <text evidence="5">Belongs to the ubiquitin-activating E1 family. UBA3 subfamily.</text>
</comment>
<reference key="1">
    <citation type="journal article" date="1998" name="Science">
        <title>The ubiquitin-related protein RUB1 and auxin response in Arabidopsis.</title>
        <authorList>
            <person name="del Pozo J.C."/>
            <person name="Timpte C."/>
            <person name="Tan S."/>
            <person name="Callis J."/>
            <person name="Estelle M."/>
        </authorList>
    </citation>
    <scope>NUCLEOTIDE SEQUENCE [MRNA]</scope>
    <scope>INTERACTION WITH AXR1 AND RUB1</scope>
    <scope>MUTAGENESIS OF CYS-215</scope>
    <scope>FUNCTION</scope>
    <source>
        <strain>cv. Columbia</strain>
    </source>
</reference>
<reference key="2">
    <citation type="journal article" date="2000" name="Nature">
        <title>Sequence and analysis of chromosome 5 of the plant Arabidopsis thaliana.</title>
        <authorList>
            <person name="Tabata S."/>
            <person name="Kaneko T."/>
            <person name="Nakamura Y."/>
            <person name="Kotani H."/>
            <person name="Kato T."/>
            <person name="Asamizu E."/>
            <person name="Miyajima N."/>
            <person name="Sasamoto S."/>
            <person name="Kimura T."/>
            <person name="Hosouchi T."/>
            <person name="Kawashima K."/>
            <person name="Kohara M."/>
            <person name="Matsumoto M."/>
            <person name="Matsuno A."/>
            <person name="Muraki A."/>
            <person name="Nakayama S."/>
            <person name="Nakazaki N."/>
            <person name="Naruo K."/>
            <person name="Okumura S."/>
            <person name="Shinpo S."/>
            <person name="Takeuchi C."/>
            <person name="Wada T."/>
            <person name="Watanabe A."/>
            <person name="Yamada M."/>
            <person name="Yasuda M."/>
            <person name="Sato S."/>
            <person name="de la Bastide M."/>
            <person name="Huang E."/>
            <person name="Spiegel L."/>
            <person name="Gnoj L."/>
            <person name="O'Shaughnessy A."/>
            <person name="Preston R."/>
            <person name="Habermann K."/>
            <person name="Murray J."/>
            <person name="Johnson D."/>
            <person name="Rohlfing T."/>
            <person name="Nelson J."/>
            <person name="Stoneking T."/>
            <person name="Pepin K."/>
            <person name="Spieth J."/>
            <person name="Sekhon M."/>
            <person name="Armstrong J."/>
            <person name="Becker M."/>
            <person name="Belter E."/>
            <person name="Cordum H."/>
            <person name="Cordes M."/>
            <person name="Courtney L."/>
            <person name="Courtney W."/>
            <person name="Dante M."/>
            <person name="Du H."/>
            <person name="Edwards J."/>
            <person name="Fryman J."/>
            <person name="Haakensen B."/>
            <person name="Lamar E."/>
            <person name="Latreille P."/>
            <person name="Leonard S."/>
            <person name="Meyer R."/>
            <person name="Mulvaney E."/>
            <person name="Ozersky P."/>
            <person name="Riley A."/>
            <person name="Strowmatt C."/>
            <person name="Wagner-McPherson C."/>
            <person name="Wollam A."/>
            <person name="Yoakum M."/>
            <person name="Bell M."/>
            <person name="Dedhia N."/>
            <person name="Parnell L."/>
            <person name="Shah R."/>
            <person name="Rodriguez M."/>
            <person name="Hoon See L."/>
            <person name="Vil D."/>
            <person name="Baker J."/>
            <person name="Kirchoff K."/>
            <person name="Toth K."/>
            <person name="King L."/>
            <person name="Bahret A."/>
            <person name="Miller B."/>
            <person name="Marra M.A."/>
            <person name="Martienssen R."/>
            <person name="McCombie W.R."/>
            <person name="Wilson R.K."/>
            <person name="Murphy G."/>
            <person name="Bancroft I."/>
            <person name="Volckaert G."/>
            <person name="Wambutt R."/>
            <person name="Duesterhoeft A."/>
            <person name="Stiekema W."/>
            <person name="Pohl T."/>
            <person name="Entian K.-D."/>
            <person name="Terryn N."/>
            <person name="Hartley N."/>
            <person name="Bent E."/>
            <person name="Johnson S."/>
            <person name="Langham S.-A."/>
            <person name="McCullagh B."/>
            <person name="Robben J."/>
            <person name="Grymonprez B."/>
            <person name="Zimmermann W."/>
            <person name="Ramsperger U."/>
            <person name="Wedler H."/>
            <person name="Balke K."/>
            <person name="Wedler E."/>
            <person name="Peters S."/>
            <person name="van Staveren M."/>
            <person name="Dirkse W."/>
            <person name="Mooijman P."/>
            <person name="Klein Lankhorst R."/>
            <person name="Weitzenegger T."/>
            <person name="Bothe G."/>
            <person name="Rose M."/>
            <person name="Hauf J."/>
            <person name="Berneiser S."/>
            <person name="Hempel S."/>
            <person name="Feldpausch M."/>
            <person name="Lamberth S."/>
            <person name="Villarroel R."/>
            <person name="Gielen J."/>
            <person name="Ardiles W."/>
            <person name="Bents O."/>
            <person name="Lemcke K."/>
            <person name="Kolesov G."/>
            <person name="Mayer K.F.X."/>
            <person name="Rudd S."/>
            <person name="Schoof H."/>
            <person name="Schueller C."/>
            <person name="Zaccaria P."/>
            <person name="Mewes H.-W."/>
            <person name="Bevan M."/>
            <person name="Fransz P.F."/>
        </authorList>
    </citation>
    <scope>NUCLEOTIDE SEQUENCE [LARGE SCALE GENOMIC DNA]</scope>
    <source>
        <strain>cv. Columbia</strain>
    </source>
</reference>
<reference key="3">
    <citation type="journal article" date="2017" name="Plant J.">
        <title>Araport11: a complete reannotation of the Arabidopsis thaliana reference genome.</title>
        <authorList>
            <person name="Cheng C.Y."/>
            <person name="Krishnakumar V."/>
            <person name="Chan A.P."/>
            <person name="Thibaud-Nissen F."/>
            <person name="Schobel S."/>
            <person name="Town C.D."/>
        </authorList>
    </citation>
    <scope>GENOME REANNOTATION</scope>
    <source>
        <strain>cv. Columbia</strain>
    </source>
</reference>
<reference key="4">
    <citation type="journal article" date="2003" name="Science">
        <title>Empirical analysis of transcriptional activity in the Arabidopsis genome.</title>
        <authorList>
            <person name="Yamada K."/>
            <person name="Lim J."/>
            <person name="Dale J.M."/>
            <person name="Chen H."/>
            <person name="Shinn P."/>
            <person name="Palm C.J."/>
            <person name="Southwick A.M."/>
            <person name="Wu H.C."/>
            <person name="Kim C.J."/>
            <person name="Nguyen M."/>
            <person name="Pham P.K."/>
            <person name="Cheuk R.F."/>
            <person name="Karlin-Newmann G."/>
            <person name="Liu S.X."/>
            <person name="Lam B."/>
            <person name="Sakano H."/>
            <person name="Wu T."/>
            <person name="Yu G."/>
            <person name="Miranda M."/>
            <person name="Quach H.L."/>
            <person name="Tripp M."/>
            <person name="Chang C.H."/>
            <person name="Lee J.M."/>
            <person name="Toriumi M.J."/>
            <person name="Chan M.M."/>
            <person name="Tang C.C."/>
            <person name="Onodera C.S."/>
            <person name="Deng J.M."/>
            <person name="Akiyama K."/>
            <person name="Ansari Y."/>
            <person name="Arakawa T."/>
            <person name="Banh J."/>
            <person name="Banno F."/>
            <person name="Bowser L."/>
            <person name="Brooks S.Y."/>
            <person name="Carninci P."/>
            <person name="Chao Q."/>
            <person name="Choy N."/>
            <person name="Enju A."/>
            <person name="Goldsmith A.D."/>
            <person name="Gurjal M."/>
            <person name="Hansen N.F."/>
            <person name="Hayashizaki Y."/>
            <person name="Johnson-Hopson C."/>
            <person name="Hsuan V.W."/>
            <person name="Iida K."/>
            <person name="Karnes M."/>
            <person name="Khan S."/>
            <person name="Koesema E."/>
            <person name="Ishida J."/>
            <person name="Jiang P.X."/>
            <person name="Jones T."/>
            <person name="Kawai J."/>
            <person name="Kamiya A."/>
            <person name="Meyers C."/>
            <person name="Nakajima M."/>
            <person name="Narusaka M."/>
            <person name="Seki M."/>
            <person name="Sakurai T."/>
            <person name="Satou M."/>
            <person name="Tamse R."/>
            <person name="Vaysberg M."/>
            <person name="Wallender E.K."/>
            <person name="Wong C."/>
            <person name="Yamamura Y."/>
            <person name="Yuan S."/>
            <person name="Shinozaki K."/>
            <person name="Davis R.W."/>
            <person name="Theologis A."/>
            <person name="Ecker J.R."/>
        </authorList>
    </citation>
    <scope>NUCLEOTIDE SEQUENCE [LARGE SCALE MRNA]</scope>
    <source>
        <strain>cv. Columbia</strain>
    </source>
</reference>
<reference key="5">
    <citation type="submission" date="2006-07" db="EMBL/GenBank/DDBJ databases">
        <title>Large-scale analysis of RIKEN Arabidopsis full-length (RAFL) cDNAs.</title>
        <authorList>
            <person name="Totoki Y."/>
            <person name="Seki M."/>
            <person name="Ishida J."/>
            <person name="Nakajima M."/>
            <person name="Enju A."/>
            <person name="Kamiya A."/>
            <person name="Narusaka M."/>
            <person name="Shin-i T."/>
            <person name="Nakagawa M."/>
            <person name="Sakamoto N."/>
            <person name="Oishi K."/>
            <person name="Kohara Y."/>
            <person name="Kobayashi M."/>
            <person name="Toyoda A."/>
            <person name="Sakaki Y."/>
            <person name="Sakurai T."/>
            <person name="Iida K."/>
            <person name="Akiyama K."/>
            <person name="Satou M."/>
            <person name="Toyoda T."/>
            <person name="Konagaya A."/>
            <person name="Carninci P."/>
            <person name="Kawai J."/>
            <person name="Hayashizaki Y."/>
            <person name="Shinozaki K."/>
        </authorList>
    </citation>
    <scope>NUCLEOTIDE SEQUENCE [LARGE SCALE MRNA]</scope>
    <source>
        <strain>cv. Columbia</strain>
    </source>
</reference>
<reference key="6">
    <citation type="journal article" date="1999" name="Proc. Natl. Acad. Sci. U.S.A.">
        <title>The Arabidopsis cullin AtCUL1 is modified by the ubiquitin-related protein RUB1.</title>
        <authorList>
            <person name="del Pozo J.C."/>
            <person name="Estelle M."/>
        </authorList>
    </citation>
    <scope>FUNCTION</scope>
</reference>
<reference key="7">
    <citation type="journal article" date="2002" name="Plant Cell">
        <title>AXR1-ECR1-dependent conjugation of RUB1 to the Arabidopsis Cullin AtCUL1 is required for auxin response.</title>
        <authorList>
            <person name="del Pozo J.C."/>
            <person name="Dharmasiri S."/>
            <person name="Hellmann H."/>
            <person name="Walker L."/>
            <person name="Gray W.M."/>
            <person name="Estelle M."/>
        </authorList>
    </citation>
    <scope>TISSUE SPECIFICITY</scope>
    <scope>DEVELOPMENTAL STAGE</scope>
</reference>
<reference key="8">
    <citation type="journal article" date="2012" name="Mol. Cell. Proteomics">
        <title>Comparative large-scale characterisation of plant vs. mammal proteins reveals similar and idiosyncratic N-alpha acetylation features.</title>
        <authorList>
            <person name="Bienvenut W.V."/>
            <person name="Sumpton D."/>
            <person name="Martinez A."/>
            <person name="Lilla S."/>
            <person name="Espagne C."/>
            <person name="Meinnel T."/>
            <person name="Giglione C."/>
        </authorList>
    </citation>
    <scope>ACETYLATION [LARGE SCALE ANALYSIS] AT ALA-2</scope>
    <scope>CLEAVAGE OF INITIATOR METHIONINE [LARGE SCALE ANALYSIS]</scope>
    <scope>IDENTIFICATION BY MASS SPECTROMETRY [LARGE SCALE ANALYSIS]</scope>
</reference>
<feature type="initiator methionine" description="Removed" evidence="6">
    <location>
        <position position="1"/>
    </location>
</feature>
<feature type="chain" id="PRO_0000194948" description="NEDD8-activating enzyme E1 catalytic subunit">
    <location>
        <begin position="2"/>
        <end position="454"/>
    </location>
</feature>
<feature type="active site" description="Glycyl thioester intermediate">
    <location>
        <position position="215"/>
    </location>
</feature>
<feature type="binding site" evidence="1">
    <location>
        <begin position="56"/>
        <end position="80"/>
    </location>
    <ligand>
        <name>ATP</name>
        <dbReference type="ChEBI" id="CHEBI:30616"/>
    </ligand>
</feature>
<feature type="modified residue" description="N-acetylalanine" evidence="6">
    <location>
        <position position="2"/>
    </location>
</feature>
<feature type="mutagenesis site" description="Loss of binding to RUB1." evidence="4">
    <original>C</original>
    <variation>A</variation>
    <location>
        <position position="215"/>
    </location>
</feature>
<feature type="sequence conflict" description="In Ref. 1; AAC27035." evidence="5" ref="1">
    <original>R</original>
    <variation>K</variation>
    <location>
        <position position="189"/>
    </location>
</feature>
<dbReference type="EC" id="6.2.1.64"/>
<dbReference type="EMBL" id="AF051135">
    <property type="protein sequence ID" value="AAC27035.1"/>
    <property type="molecule type" value="mRNA"/>
</dbReference>
<dbReference type="EMBL" id="AC069326">
    <property type="status" value="NOT_ANNOTATED_CDS"/>
    <property type="molecule type" value="Genomic_DNA"/>
</dbReference>
<dbReference type="EMBL" id="CP002688">
    <property type="protein sequence ID" value="AED92667.1"/>
    <property type="molecule type" value="Genomic_DNA"/>
</dbReference>
<dbReference type="EMBL" id="AY050426">
    <property type="protein sequence ID" value="AAK91442.1"/>
    <property type="molecule type" value="mRNA"/>
</dbReference>
<dbReference type="EMBL" id="AY120692">
    <property type="protein sequence ID" value="AAM52235.1"/>
    <property type="molecule type" value="mRNA"/>
</dbReference>
<dbReference type="EMBL" id="AK226388">
    <property type="protein sequence ID" value="BAE98534.1"/>
    <property type="molecule type" value="mRNA"/>
</dbReference>
<dbReference type="PIR" id="T52253">
    <property type="entry name" value="T52253"/>
</dbReference>
<dbReference type="RefSeq" id="NP_568370.1">
    <property type="nucleotide sequence ID" value="NM_121923.4"/>
</dbReference>
<dbReference type="SMR" id="O65041"/>
<dbReference type="BioGRID" id="17314">
    <property type="interactions" value="5"/>
</dbReference>
<dbReference type="FunCoup" id="O65041">
    <property type="interactions" value="4968"/>
</dbReference>
<dbReference type="STRING" id="3702.O65041"/>
<dbReference type="iPTMnet" id="O65041"/>
<dbReference type="PaxDb" id="3702-AT5G19180.1"/>
<dbReference type="ProteomicsDB" id="228599"/>
<dbReference type="EnsemblPlants" id="AT5G19180.1">
    <property type="protein sequence ID" value="AT5G19180.1"/>
    <property type="gene ID" value="AT5G19180"/>
</dbReference>
<dbReference type="GeneID" id="832038"/>
<dbReference type="Gramene" id="AT5G19180.1">
    <property type="protein sequence ID" value="AT5G19180.1"/>
    <property type="gene ID" value="AT5G19180"/>
</dbReference>
<dbReference type="KEGG" id="ath:AT5G19180"/>
<dbReference type="Araport" id="AT5G19180"/>
<dbReference type="TAIR" id="AT5G19180">
    <property type="gene designation" value="ECR1"/>
</dbReference>
<dbReference type="eggNOG" id="KOG2015">
    <property type="taxonomic scope" value="Eukaryota"/>
</dbReference>
<dbReference type="HOGENOM" id="CLU_013325_13_1_1"/>
<dbReference type="InParanoid" id="O65041"/>
<dbReference type="OMA" id="PYLENYM"/>
<dbReference type="PhylomeDB" id="O65041"/>
<dbReference type="UniPathway" id="UPA00885"/>
<dbReference type="PRO" id="PR:O65041"/>
<dbReference type="Proteomes" id="UP000006548">
    <property type="component" value="Chromosome 5"/>
</dbReference>
<dbReference type="ExpressionAtlas" id="O65041">
    <property type="expression patterns" value="baseline and differential"/>
</dbReference>
<dbReference type="GO" id="GO:0005829">
    <property type="term" value="C:cytosol"/>
    <property type="evidence" value="ECO:0007005"/>
    <property type="project" value="TAIR"/>
</dbReference>
<dbReference type="GO" id="GO:0005634">
    <property type="term" value="C:nucleus"/>
    <property type="evidence" value="ECO:0007669"/>
    <property type="project" value="UniProtKB-SubCell"/>
</dbReference>
<dbReference type="GO" id="GO:0005524">
    <property type="term" value="F:ATP binding"/>
    <property type="evidence" value="ECO:0007669"/>
    <property type="project" value="UniProtKB-KW"/>
</dbReference>
<dbReference type="GO" id="GO:0019781">
    <property type="term" value="F:NEDD8 activating enzyme activity"/>
    <property type="evidence" value="ECO:0000314"/>
    <property type="project" value="TAIR"/>
</dbReference>
<dbReference type="GO" id="GO:0046982">
    <property type="term" value="F:protein heterodimerization activity"/>
    <property type="evidence" value="ECO:0000303"/>
    <property type="project" value="TAIR"/>
</dbReference>
<dbReference type="GO" id="GO:0045116">
    <property type="term" value="P:protein neddylation"/>
    <property type="evidence" value="ECO:0000304"/>
    <property type="project" value="TAIR"/>
</dbReference>
<dbReference type="CDD" id="cd01488">
    <property type="entry name" value="Uba3_RUB"/>
    <property type="match status" value="1"/>
</dbReference>
<dbReference type="FunFam" id="1.10.10.520:FF:000001">
    <property type="entry name" value="NEDD8-activating enzyme E1 catalytic subunit"/>
    <property type="match status" value="1"/>
</dbReference>
<dbReference type="Gene3D" id="3.40.50.720">
    <property type="entry name" value="NAD(P)-binding Rossmann-like Domain"/>
    <property type="match status" value="1"/>
</dbReference>
<dbReference type="Gene3D" id="1.10.10.520">
    <property type="entry name" value="Ubiquitin activating enzymes (Uba3). Chain: B, domain 2"/>
    <property type="match status" value="1"/>
</dbReference>
<dbReference type="Gene3D" id="3.10.290.20">
    <property type="entry name" value="Ubiquitin-like 2 activating enzyme e1b. Chain: B, domain 3"/>
    <property type="match status" value="1"/>
</dbReference>
<dbReference type="InterPro" id="IPR014929">
    <property type="entry name" value="E2-binding"/>
</dbReference>
<dbReference type="InterPro" id="IPR045886">
    <property type="entry name" value="ThiF/MoeB/HesA"/>
</dbReference>
<dbReference type="InterPro" id="IPR000594">
    <property type="entry name" value="ThiF_NAD_FAD-bd"/>
</dbReference>
<dbReference type="InterPro" id="IPR023318">
    <property type="entry name" value="Ub_act_enz_dom_a_sf"/>
</dbReference>
<dbReference type="InterPro" id="IPR030468">
    <property type="entry name" value="Uba3_N"/>
</dbReference>
<dbReference type="InterPro" id="IPR035985">
    <property type="entry name" value="Ubiquitin-activating_enz"/>
</dbReference>
<dbReference type="InterPro" id="IPR033127">
    <property type="entry name" value="UBQ-activ_enz_E1_Cys_AS"/>
</dbReference>
<dbReference type="PANTHER" id="PTHR10953:SF6">
    <property type="entry name" value="NEDD8-ACTIVATING ENZYME E1 CATALYTIC SUBUNIT"/>
    <property type="match status" value="1"/>
</dbReference>
<dbReference type="PANTHER" id="PTHR10953">
    <property type="entry name" value="UBIQUITIN-ACTIVATING ENZYME E1"/>
    <property type="match status" value="1"/>
</dbReference>
<dbReference type="Pfam" id="PF08825">
    <property type="entry name" value="E2_bind"/>
    <property type="match status" value="1"/>
</dbReference>
<dbReference type="Pfam" id="PF00899">
    <property type="entry name" value="ThiF"/>
    <property type="match status" value="1"/>
</dbReference>
<dbReference type="SMART" id="SM01181">
    <property type="entry name" value="E2_bind"/>
    <property type="match status" value="1"/>
</dbReference>
<dbReference type="SUPFAM" id="SSF69572">
    <property type="entry name" value="Activating enzymes of the ubiquitin-like proteins"/>
    <property type="match status" value="1"/>
</dbReference>
<dbReference type="PROSITE" id="PS00865">
    <property type="entry name" value="UBIQUITIN_ACTIVAT_2"/>
    <property type="match status" value="1"/>
</dbReference>
<evidence type="ECO:0000250" key="1"/>
<evidence type="ECO:0000269" key="2">
    <source>
    </source>
</evidence>
<evidence type="ECO:0000269" key="3">
    <source>
    </source>
</evidence>
<evidence type="ECO:0000269" key="4">
    <source>
    </source>
</evidence>
<evidence type="ECO:0000305" key="5"/>
<evidence type="ECO:0007744" key="6">
    <source>
    </source>
</evidence>
<keyword id="KW-0007">Acetylation</keyword>
<keyword id="KW-0067">ATP-binding</keyword>
<keyword id="KW-0436">Ligase</keyword>
<keyword id="KW-0547">Nucleotide-binding</keyword>
<keyword id="KW-0539">Nucleus</keyword>
<keyword id="KW-1185">Reference proteome</keyword>
<keyword id="KW-0833">Ubl conjugation pathway</keyword>